<comment type="function">
    <text evidence="2 3">Catalyzes the oxidation of F420H(2) with O(2) (PubMed:15340796, PubMed:16218963). May be involved in O(2) detoxification, reducing the intracellular O(2) concentration to a level allowing growth at the expense of methane formation (PubMed:15340796).</text>
</comment>
<comment type="catalytic activity">
    <reaction evidence="2 3">
        <text>2 reduced coenzyme F420-(gamma-L-Glu)(n) + O2 = 2 oxidized coenzyme F420-(gamma-L-Glu)(n) + 2 H2O + 2 H(+)</text>
        <dbReference type="Rhea" id="RHEA:39711"/>
        <dbReference type="Rhea" id="RHEA-COMP:12939"/>
        <dbReference type="Rhea" id="RHEA-COMP:14378"/>
        <dbReference type="ChEBI" id="CHEBI:15377"/>
        <dbReference type="ChEBI" id="CHEBI:15378"/>
        <dbReference type="ChEBI" id="CHEBI:15379"/>
        <dbReference type="ChEBI" id="CHEBI:133980"/>
        <dbReference type="ChEBI" id="CHEBI:139511"/>
        <dbReference type="EC" id="1.5.3.22"/>
    </reaction>
</comment>
<comment type="cofactor">
    <cofactor evidence="2 4 5 6">
        <name>FMN</name>
        <dbReference type="ChEBI" id="CHEBI:58210"/>
    </cofactor>
    <text evidence="2 4 5 6">Binds 1 FMN per subunit.</text>
</comment>
<comment type="cofactor">
    <cofactor evidence="2 4">
        <name>Fe cation</name>
        <dbReference type="ChEBI" id="CHEBI:24875"/>
    </cofactor>
    <text evidence="2 4">Binds 2 iron ions per subunit.</text>
</comment>
<comment type="biophysicochemical properties">
    <kinetics>
        <KM evidence="2">30 uM for F420H(2) (at an O(2) concentration of 40 uM)</KM>
        <KM evidence="2">2 uM for O(2) (at a F420H(2) concentration of 30 uM)</KM>
        <Vmax evidence="2">240.0 umol/min/mg enzyme toward F420H(2) (at 65 degrees Celsius)</Vmax>
        <Vmax evidence="2">80.0 umol/min/mg enzyme toward O(2)</Vmax>
    </kinetics>
    <phDependence>
        <text evidence="2">Optimum pH is near 7.5.</text>
    </phDependence>
</comment>
<comment type="subunit">
    <text evidence="4 5 6">Homodimer (PubMed:7649162). Homotetramer (PubMed:17480207, PubMed:7730275). The tetramer is composed of two functional dimers (PubMed:17480207).</text>
</comment>
<comment type="induction">
    <text evidence="5 6">By iron limitation.</text>
</comment>
<comment type="domain">
    <text evidence="4">Contains an N-terminal beta-lactamase-like domain harboring a di-iron center, and a C-terminal flavodoxin-like domain containing FMN. Two monomers assemble via a head-to-tail arrangement, such that the beta-lactamase and the flavodoxin domains face each other, thereby forming two separated and presumably independent active sites.</text>
</comment>
<comment type="similarity">
    <text evidence="9">In the N-terminal section; belongs to the zinc metallo-hydrolase group 3 family.</text>
</comment>
<accession>Q50497</accession>
<accession>D9PYL0</accession>
<feature type="chain" id="PRO_0000216808" description="Coenzyme F420H(2) oxidase">
    <location>
        <begin position="1"/>
        <end position="404"/>
    </location>
</feature>
<feature type="domain" description="Flavodoxin-like" evidence="1">
    <location>
        <begin position="259"/>
        <end position="399"/>
    </location>
</feature>
<feature type="binding site" evidence="4 10 11">
    <location>
        <position position="83"/>
    </location>
    <ligand>
        <name>Fe cation</name>
        <dbReference type="ChEBI" id="CHEBI:24875"/>
        <label>1</label>
    </ligand>
</feature>
<feature type="binding site" evidence="4 10 11">
    <location>
        <position position="85"/>
    </location>
    <ligand>
        <name>Fe cation</name>
        <dbReference type="ChEBI" id="CHEBI:24875"/>
        <label>1</label>
    </ligand>
</feature>
<feature type="binding site" evidence="4 10 11">
    <location>
        <position position="87"/>
    </location>
    <ligand>
        <name>Fe cation</name>
        <dbReference type="ChEBI" id="CHEBI:24875"/>
        <label>2</label>
    </ligand>
</feature>
<feature type="binding site" evidence="4 10 11 12">
    <location>
        <position position="88"/>
    </location>
    <ligand>
        <name>Fe cation</name>
        <dbReference type="ChEBI" id="CHEBI:24875"/>
        <label>2</label>
    </ligand>
</feature>
<feature type="binding site" evidence="4 10">
    <location>
        <position position="151"/>
    </location>
    <ligand>
        <name>Fe cation</name>
        <dbReference type="ChEBI" id="CHEBI:24875"/>
        <label>1</label>
    </ligand>
</feature>
<feature type="binding site" evidence="4 10 11">
    <location>
        <position position="170"/>
    </location>
    <ligand>
        <name>Fe cation</name>
        <dbReference type="ChEBI" id="CHEBI:24875"/>
        <label>1</label>
    </ligand>
</feature>
<feature type="binding site" evidence="4 10 11 12">
    <location>
        <position position="170"/>
    </location>
    <ligand>
        <name>Fe cation</name>
        <dbReference type="ChEBI" id="CHEBI:24875"/>
        <label>2</label>
    </ligand>
</feature>
<feature type="binding site" evidence="4 10 11 12">
    <location>
        <position position="233"/>
    </location>
    <ligand>
        <name>Fe cation</name>
        <dbReference type="ChEBI" id="CHEBI:24875"/>
        <label>2</label>
    </ligand>
</feature>
<feature type="binding site" evidence="4 10 11 12">
    <location>
        <begin position="265"/>
        <end position="270"/>
    </location>
    <ligand>
        <name>FMN</name>
        <dbReference type="ChEBI" id="CHEBI:58210"/>
    </ligand>
</feature>
<feature type="binding site" evidence="4 10 11 12">
    <location>
        <begin position="317"/>
        <end position="320"/>
    </location>
    <ligand>
        <name>FMN</name>
        <dbReference type="ChEBI" id="CHEBI:58210"/>
    </ligand>
</feature>
<feature type="binding site" evidence="4 10 11 12">
    <location>
        <begin position="351"/>
        <end position="356"/>
    </location>
    <ligand>
        <name>FMN</name>
        <dbReference type="ChEBI" id="CHEBI:58210"/>
    </ligand>
</feature>
<feature type="strand" evidence="13">
    <location>
        <begin position="6"/>
        <end position="9"/>
    </location>
</feature>
<feature type="strand" evidence="13">
    <location>
        <begin position="12"/>
        <end position="14"/>
    </location>
</feature>
<feature type="strand" evidence="13">
    <location>
        <begin position="17"/>
        <end position="19"/>
    </location>
</feature>
<feature type="strand" evidence="13">
    <location>
        <begin position="33"/>
        <end position="35"/>
    </location>
</feature>
<feature type="strand" evidence="13">
    <location>
        <begin position="38"/>
        <end position="41"/>
    </location>
</feature>
<feature type="strand" evidence="13">
    <location>
        <begin position="46"/>
        <end position="49"/>
    </location>
</feature>
<feature type="helix" evidence="13">
    <location>
        <begin position="57"/>
        <end position="71"/>
    </location>
</feature>
<feature type="strand" evidence="13">
    <location>
        <begin position="78"/>
        <end position="80"/>
    </location>
</feature>
<feature type="helix" evidence="13">
    <location>
        <begin position="86"/>
        <end position="89"/>
    </location>
</feature>
<feature type="helix" evidence="13">
    <location>
        <begin position="92"/>
        <end position="98"/>
    </location>
</feature>
<feature type="strand" evidence="13">
    <location>
        <begin position="104"/>
        <end position="106"/>
    </location>
</feature>
<feature type="helix" evidence="13">
    <location>
        <begin position="108"/>
        <end position="117"/>
    </location>
</feature>
<feature type="helix" evidence="13">
    <location>
        <begin position="119"/>
        <end position="123"/>
    </location>
</feature>
<feature type="strand" evidence="13">
    <location>
        <begin position="126"/>
        <end position="128"/>
    </location>
</feature>
<feature type="strand" evidence="13">
    <location>
        <begin position="134"/>
        <end position="136"/>
    </location>
</feature>
<feature type="strand" evidence="13">
    <location>
        <begin position="141"/>
        <end position="146"/>
    </location>
</feature>
<feature type="strand" evidence="13">
    <location>
        <begin position="150"/>
        <end position="152"/>
    </location>
</feature>
<feature type="strand" evidence="13">
    <location>
        <begin position="156"/>
        <end position="161"/>
    </location>
</feature>
<feature type="turn" evidence="13">
    <location>
        <begin position="162"/>
        <end position="164"/>
    </location>
</feature>
<feature type="strand" evidence="13">
    <location>
        <begin position="165"/>
        <end position="167"/>
    </location>
</feature>
<feature type="turn" evidence="13">
    <location>
        <begin position="169"/>
        <end position="172"/>
    </location>
</feature>
<feature type="helix" evidence="13">
    <location>
        <begin position="183"/>
        <end position="185"/>
    </location>
</feature>
<feature type="helix" evidence="13">
    <location>
        <begin position="188"/>
        <end position="202"/>
    </location>
</feature>
<feature type="helix" evidence="13">
    <location>
        <begin position="204"/>
        <end position="206"/>
    </location>
</feature>
<feature type="helix" evidence="13">
    <location>
        <begin position="207"/>
        <end position="219"/>
    </location>
</feature>
<feature type="helix" evidence="13">
    <location>
        <begin position="223"/>
        <end position="225"/>
    </location>
</feature>
<feature type="strand" evidence="13">
    <location>
        <begin position="227"/>
        <end position="230"/>
    </location>
</feature>
<feature type="strand" evidence="13">
    <location>
        <begin position="232"/>
        <end position="234"/>
    </location>
</feature>
<feature type="strand" evidence="13">
    <location>
        <begin position="236"/>
        <end position="239"/>
    </location>
</feature>
<feature type="helix" evidence="13">
    <location>
        <begin position="240"/>
        <end position="251"/>
    </location>
</feature>
<feature type="strand" evidence="13">
    <location>
        <begin position="257"/>
        <end position="263"/>
    </location>
</feature>
<feature type="strand" evidence="13">
    <location>
        <begin position="266"/>
        <end position="268"/>
    </location>
</feature>
<feature type="helix" evidence="13">
    <location>
        <begin position="269"/>
        <end position="282"/>
    </location>
</feature>
<feature type="turn" evidence="13">
    <location>
        <begin position="283"/>
        <end position="285"/>
    </location>
</feature>
<feature type="strand" evidence="13">
    <location>
        <begin position="287"/>
        <end position="292"/>
    </location>
</feature>
<feature type="turn" evidence="13">
    <location>
        <begin position="293"/>
        <end position="295"/>
    </location>
</feature>
<feature type="helix" evidence="13">
    <location>
        <begin position="298"/>
        <end position="306"/>
    </location>
</feature>
<feature type="strand" evidence="13">
    <location>
        <begin position="309"/>
        <end position="314"/>
    </location>
</feature>
<feature type="helix" evidence="13">
    <location>
        <begin position="325"/>
        <end position="336"/>
    </location>
</feature>
<feature type="helix" evidence="13">
    <location>
        <begin position="338"/>
        <end position="340"/>
    </location>
</feature>
<feature type="strand" evidence="13">
    <location>
        <begin position="344"/>
        <end position="355"/>
    </location>
</feature>
<feature type="helix" evidence="13">
    <location>
        <begin position="358"/>
        <end position="368"/>
    </location>
</feature>
<feature type="strand" evidence="13">
    <location>
        <begin position="371"/>
        <end position="382"/>
    </location>
</feature>
<feature type="helix" evidence="13">
    <location>
        <begin position="385"/>
        <end position="402"/>
    </location>
</feature>
<keyword id="KW-0002">3D-structure</keyword>
<keyword id="KW-0903">Direct protein sequencing</keyword>
<keyword id="KW-0249">Electron transport</keyword>
<keyword id="KW-0285">Flavoprotein</keyword>
<keyword id="KW-0288">FMN</keyword>
<keyword id="KW-0408">Iron</keyword>
<keyword id="KW-0479">Metal-binding</keyword>
<keyword id="KW-0560">Oxidoreductase</keyword>
<keyword id="KW-0813">Transport</keyword>
<sequence>MKAAAKRISDGVYWTGVLDWDLRNYHGYTLQGTTYNAYLVCGDEGVALIDNSYPGTFDELMARVEDALQQVGMERVDYIIQNHVEKDHSGVLVELHRRFPEAPIYCTEVAVKGLLKHYPSLREAEFMTVKTGDVLDLGGKTLTFLETPLLHWPDSMFTLLDEDGILFSNDAFGQHLCCPQRLDREIPEYILMDAARKFYANLITPLSKLVLKKFDEVKELGLLERIQMIAPSHGQIWTDPMKIIEAYTGWATGMVDERVTVIYDTMHGSTRKMAHAIAEGAMSEGVDVRVYCLHEDDRSEIVKDILESGAIALGAPTIYDEPYPSVGDLLMYLRGLKFNRTLTRKALVFGSMGGNGGATGTMKELLAEAGFDVACEEEVYYVPTGDELDACFEAGRKLAAEIRR</sequence>
<evidence type="ECO:0000255" key="1">
    <source>
        <dbReference type="PROSITE-ProRule" id="PRU00088"/>
    </source>
</evidence>
<evidence type="ECO:0000269" key="2">
    <source>
    </source>
</evidence>
<evidence type="ECO:0000269" key="3">
    <source>
    </source>
</evidence>
<evidence type="ECO:0000269" key="4">
    <source>
    </source>
</evidence>
<evidence type="ECO:0000269" key="5">
    <source>
    </source>
</evidence>
<evidence type="ECO:0000269" key="6">
    <source>
    </source>
</evidence>
<evidence type="ECO:0000303" key="7">
    <source>
    </source>
</evidence>
<evidence type="ECO:0000303" key="8">
    <source>
    </source>
</evidence>
<evidence type="ECO:0000305" key="9"/>
<evidence type="ECO:0007744" key="10">
    <source>
        <dbReference type="PDB" id="2OHH"/>
    </source>
</evidence>
<evidence type="ECO:0007744" key="11">
    <source>
        <dbReference type="PDB" id="2OHI"/>
    </source>
</evidence>
<evidence type="ECO:0007744" key="12">
    <source>
        <dbReference type="PDB" id="2OHJ"/>
    </source>
</evidence>
<evidence type="ECO:0007829" key="13">
    <source>
        <dbReference type="PDB" id="2OHH"/>
    </source>
</evidence>
<protein>
    <recommendedName>
        <fullName evidence="9">Coenzyme F420H(2) oxidase</fullName>
        <ecNumber evidence="2 3">1.5.3.22</ecNumber>
    </recommendedName>
    <alternativeName>
        <fullName>FMN protein FprA</fullName>
    </alternativeName>
    <alternativeName>
        <fullName evidence="7">Flavoprotein A</fullName>
    </alternativeName>
    <alternativeName>
        <fullName>Type A flavoprotein FprA</fullName>
    </alternativeName>
</protein>
<organism>
    <name type="scientific">Methanothermobacter marburgensis (strain ATCC BAA-927 / DSM 2133 / JCM 14651 / NBRC 100331 / OCM 82 / Marburg)</name>
    <name type="common">Methanobacterium thermoautotrophicum</name>
    <dbReference type="NCBI Taxonomy" id="79929"/>
    <lineage>
        <taxon>Archaea</taxon>
        <taxon>Methanobacteriati</taxon>
        <taxon>Methanobacteriota</taxon>
        <taxon>Methanomada group</taxon>
        <taxon>Methanobacteria</taxon>
        <taxon>Methanobacteriales</taxon>
        <taxon>Methanobacteriaceae</taxon>
        <taxon>Methanothermobacter</taxon>
    </lineage>
</organism>
<reference key="1">
    <citation type="journal article" date="1995" name="J. Bacteriol.">
        <title>Purification and structural characterization of a flavoprotein induced by iron limitation in Methanobacterium thermoautotrophicum Marburg.</title>
        <authorList>
            <person name="Wasserfallen A."/>
            <person name="Huber K."/>
            <person name="Leisinger T."/>
        </authorList>
    </citation>
    <scope>NUCLEOTIDE SEQUENCE [GENOMIC DNA]</scope>
    <scope>PROTEIN SEQUENCE OF 1-31</scope>
    <scope>COFACTOR</scope>
    <scope>SUBUNIT</scope>
    <scope>INDUCTION</scope>
    <source>
        <strain>ATCC BAA-927 / DSM 2133 / JCM 14651 / NBRC 100331 / OCM 82 / Marburg</strain>
    </source>
</reference>
<reference key="2">
    <citation type="journal article" date="2010" name="J. Bacteriol.">
        <title>Complete genome sequence of Methanothermobacter marburgensis, a methanoarchaeon model organism.</title>
        <authorList>
            <person name="Liesegang H."/>
            <person name="Kaster A.K."/>
            <person name="Wiezer A."/>
            <person name="Goenrich M."/>
            <person name="Wollherr A."/>
            <person name="Seedorf H."/>
            <person name="Gottschalk G."/>
            <person name="Thauer R.K."/>
        </authorList>
    </citation>
    <scope>NUCLEOTIDE SEQUENCE [LARGE SCALE GENOMIC DNA]</scope>
    <source>
        <strain>ATCC BAA-927 / DSM 2133 / JCM 14651 / NBRC 100331 / OCM 82 / Marburg</strain>
    </source>
</reference>
<reference key="3">
    <citation type="journal article" date="1995" name="Eur. J. Biochem.">
        <title>Characterization of a 45-kDa flavoprotein and evidence for a rubredoxin, two proteins that could participate in electron transport from H2 to CO2 in methanogenesis in Methanobacterium thermoautotrophicum.</title>
        <authorList>
            <person name="Noelling J."/>
            <person name="Ishii M."/>
            <person name="Koch J."/>
            <person name="Pihl T.D."/>
            <person name="Reeve J.N."/>
            <person name="Thauer R.K."/>
            <person name="Hedderich R."/>
        </authorList>
    </citation>
    <scope>PROTEIN SEQUENCE OF 1-22</scope>
    <scope>COFACTOR</scope>
    <scope>SUBUNIT</scope>
    <scope>INDUCTION</scope>
    <source>
        <strain>ATCC BAA-927 / DSM 2133 / JCM 14651 / NBRC 100331 / OCM 82 / Marburg</strain>
    </source>
</reference>
<reference key="4">
    <citation type="journal article" date="1998" name="Eur. J. Biochem.">
        <title>A family of flavoproteins in the domains Archaea and Bacteria.</title>
        <authorList>
            <person name="Wasserfallen A."/>
            <person name="Ragettli S."/>
            <person name="Jouanneau Y."/>
            <person name="Leisinger T."/>
        </authorList>
    </citation>
    <scope>DISCUSSION OF FUNCTION</scope>
    <source>
        <strain>ATCC BAA-927 / DSM 2133 / JCM 14651 / NBRC 100331 / OCM 82 / Marburg</strain>
    </source>
</reference>
<reference key="5">
    <citation type="journal article" date="2004" name="Arch. Microbiol.">
        <title>F420H2 oxidase (FprA) from Methanobrevibacter arboriphilus, a coenzyme F420-dependent enzyme involved in O2 detoxification.</title>
        <authorList>
            <person name="Seedorf H."/>
            <person name="Dreisbach A."/>
            <person name="Hedderich R."/>
            <person name="Shima S."/>
            <person name="Thauer R.K."/>
        </authorList>
    </citation>
    <scope>FUNCTION</scope>
    <scope>CATALYTIC ACTIVITY</scope>
    <scope>COFACTOR</scope>
    <scope>BIOPHYSICOCHEMICAL PROPERTIES</scope>
    <source>
        <strain>ATCC BAA-927 / DSM 2133 / JCM 14651 / NBRC 100331 / OCM 82 / Marburg</strain>
    </source>
</reference>
<reference key="6">
    <citation type="journal article" date="2005" name="FEBS J.">
        <title>Si-face stereospecificity at C5 of coenzyme F420 for F420H2 oxidase from methanogenic Archaea as determined by mass spectrometry.</title>
        <authorList>
            <person name="Seedorf H."/>
            <person name="Kahnt J."/>
            <person name="Pierik A.J."/>
            <person name="Thauer R.K."/>
        </authorList>
    </citation>
    <scope>FUNCTION</scope>
    <scope>CATALYTIC ACTIVITY</scope>
    <source>
        <strain>ATCC BAA-927 / DSM 2133 / JCM 14651 / NBRC 100331 / OCM 82 / Marburg</strain>
    </source>
</reference>
<reference evidence="10 11 12" key="7">
    <citation type="journal article" date="2007" name="FEBS J.">
        <title>Structure of coenzyme F420H2 oxidase (FprA), a di-iron flavoprotein from methanogenic Archaea catalyzing the reduction of O2 to H2O.</title>
        <authorList>
            <person name="Seedorf H."/>
            <person name="Hagemeier C.H."/>
            <person name="Shima S."/>
            <person name="Thauer R.K."/>
            <person name="Warkentin E."/>
            <person name="Ermler U."/>
        </authorList>
    </citation>
    <scope>X-RAY CRYSTALLOGRAPHY (1.70 ANGSTROMS) IN COMPLEXES WITH FMN AND IRON</scope>
    <scope>REACTION MECHANISM</scope>
    <scope>COFACTOR</scope>
    <scope>SUBUNIT</scope>
    <scope>DOMAIN</scope>
</reference>
<proteinExistence type="evidence at protein level"/>
<name>FPRA_METTM</name>
<gene>
    <name evidence="8" type="primary">fprA</name>
    <name evidence="7" type="synonym">fpaA</name>
    <name type="synonym">fprA3</name>
    <name type="ordered locus">MTBMA_c17400</name>
</gene>
<dbReference type="EC" id="1.5.3.22" evidence="2 3"/>
<dbReference type="EMBL" id="U17835">
    <property type="protein sequence ID" value="AAB88013.1"/>
    <property type="molecule type" value="Genomic_DNA"/>
</dbReference>
<dbReference type="EMBL" id="CP001710">
    <property type="protein sequence ID" value="ADL59308.1"/>
    <property type="molecule type" value="Genomic_DNA"/>
</dbReference>
<dbReference type="RefSeq" id="WP_013296518.1">
    <property type="nucleotide sequence ID" value="NC_014408.1"/>
</dbReference>
<dbReference type="PDB" id="2OHH">
    <property type="method" value="X-ray"/>
    <property type="resolution" value="1.70 A"/>
    <property type="chains" value="A/B/D/E=1-404"/>
</dbReference>
<dbReference type="PDB" id="2OHI">
    <property type="method" value="X-ray"/>
    <property type="resolution" value="2.30 A"/>
    <property type="chains" value="A/B/D/E/G/H/I/J=1-404"/>
</dbReference>
<dbReference type="PDB" id="2OHJ">
    <property type="method" value="X-ray"/>
    <property type="resolution" value="2.26 A"/>
    <property type="chains" value="A/B/D/E=1-404"/>
</dbReference>
<dbReference type="PDBsum" id="2OHH"/>
<dbReference type="PDBsum" id="2OHI"/>
<dbReference type="PDBsum" id="2OHJ"/>
<dbReference type="SMR" id="Q50497"/>
<dbReference type="STRING" id="79929.MTBMA_c17400"/>
<dbReference type="PaxDb" id="79929-MTBMA_c17400"/>
<dbReference type="GeneID" id="43707533"/>
<dbReference type="GeneID" id="9705451"/>
<dbReference type="KEGG" id="mmg:MTBMA_c17400"/>
<dbReference type="PATRIC" id="fig|79929.8.peg.1677"/>
<dbReference type="HOGENOM" id="CLU_017490_0_0_2"/>
<dbReference type="OrthoDB" id="6433at2157"/>
<dbReference type="BioCyc" id="MetaCyc:MONOMER-18960"/>
<dbReference type="BRENDA" id="1.5.3.22">
    <property type="organism ID" value="7427"/>
</dbReference>
<dbReference type="EvolutionaryTrace" id="Q50497"/>
<dbReference type="Proteomes" id="UP000000345">
    <property type="component" value="Chromosome"/>
</dbReference>
<dbReference type="GO" id="GO:0009055">
    <property type="term" value="F:electron transfer activity"/>
    <property type="evidence" value="ECO:0007669"/>
    <property type="project" value="InterPro"/>
</dbReference>
<dbReference type="GO" id="GO:0010181">
    <property type="term" value="F:FMN binding"/>
    <property type="evidence" value="ECO:0007669"/>
    <property type="project" value="InterPro"/>
</dbReference>
<dbReference type="GO" id="GO:0046872">
    <property type="term" value="F:metal ion binding"/>
    <property type="evidence" value="ECO:0007669"/>
    <property type="project" value="UniProtKB-KW"/>
</dbReference>
<dbReference type="GO" id="GO:0016491">
    <property type="term" value="F:oxidoreductase activity"/>
    <property type="evidence" value="ECO:0007669"/>
    <property type="project" value="UniProtKB-KW"/>
</dbReference>
<dbReference type="CDD" id="cd07709">
    <property type="entry name" value="flavodiiron_proteins_MBL-fold"/>
    <property type="match status" value="1"/>
</dbReference>
<dbReference type="Gene3D" id="3.40.50.360">
    <property type="match status" value="1"/>
</dbReference>
<dbReference type="Gene3D" id="3.60.15.10">
    <property type="entry name" value="Ribonuclease Z/Hydroxyacylglutathione hydrolase-like"/>
    <property type="match status" value="1"/>
</dbReference>
<dbReference type="InterPro" id="IPR008254">
    <property type="entry name" value="Flavodoxin/NO_synth"/>
</dbReference>
<dbReference type="InterPro" id="IPR001226">
    <property type="entry name" value="Flavodoxin_CS"/>
</dbReference>
<dbReference type="InterPro" id="IPR029039">
    <property type="entry name" value="Flavoprotein-like_sf"/>
</dbReference>
<dbReference type="InterPro" id="IPR001279">
    <property type="entry name" value="Metallo-B-lactamas"/>
</dbReference>
<dbReference type="InterPro" id="IPR045761">
    <property type="entry name" value="ODP_dom"/>
</dbReference>
<dbReference type="InterPro" id="IPR036866">
    <property type="entry name" value="RibonucZ/Hydroxyglut_hydro"/>
</dbReference>
<dbReference type="InterPro" id="IPR016440">
    <property type="entry name" value="Rubredoxin-O_OxRdtase"/>
</dbReference>
<dbReference type="PANTHER" id="PTHR43717">
    <property type="entry name" value="ANAEROBIC NITRIC OXIDE REDUCTASE FLAVORUBREDOXIN"/>
    <property type="match status" value="1"/>
</dbReference>
<dbReference type="PANTHER" id="PTHR43717:SF1">
    <property type="entry name" value="ANAEROBIC NITRIC OXIDE REDUCTASE FLAVORUBREDOXIN"/>
    <property type="match status" value="1"/>
</dbReference>
<dbReference type="Pfam" id="PF00258">
    <property type="entry name" value="Flavodoxin_1"/>
    <property type="match status" value="1"/>
</dbReference>
<dbReference type="Pfam" id="PF19583">
    <property type="entry name" value="ODP"/>
    <property type="match status" value="1"/>
</dbReference>
<dbReference type="PIRSF" id="PIRSF005243">
    <property type="entry name" value="ROO"/>
    <property type="match status" value="1"/>
</dbReference>
<dbReference type="SMART" id="SM00849">
    <property type="entry name" value="Lactamase_B"/>
    <property type="match status" value="1"/>
</dbReference>
<dbReference type="SUPFAM" id="SSF52218">
    <property type="entry name" value="Flavoproteins"/>
    <property type="match status" value="1"/>
</dbReference>
<dbReference type="SUPFAM" id="SSF56281">
    <property type="entry name" value="Metallo-hydrolase/oxidoreductase"/>
    <property type="match status" value="1"/>
</dbReference>
<dbReference type="PROSITE" id="PS00201">
    <property type="entry name" value="FLAVODOXIN"/>
    <property type="match status" value="1"/>
</dbReference>
<dbReference type="PROSITE" id="PS50902">
    <property type="entry name" value="FLAVODOXIN_LIKE"/>
    <property type="match status" value="1"/>
</dbReference>